<organism>
    <name type="scientific">Yersinia pestis</name>
    <dbReference type="NCBI Taxonomy" id="632"/>
    <lineage>
        <taxon>Bacteria</taxon>
        <taxon>Pseudomonadati</taxon>
        <taxon>Pseudomonadota</taxon>
        <taxon>Gammaproteobacteria</taxon>
        <taxon>Enterobacterales</taxon>
        <taxon>Yersiniaceae</taxon>
        <taxon>Yersinia</taxon>
    </lineage>
</organism>
<gene>
    <name evidence="1" type="primary">rpmC</name>
    <name type="ordered locus">YPO0218</name>
    <name type="ordered locus">y3998</name>
    <name type="ordered locus">YP_0215</name>
</gene>
<sequence>MKAQELREKSVEELNTELLNLLREQFNLRMQAASGQLQQTHLLKQVRRNVARVKTLLTEKAGA</sequence>
<dbReference type="EMBL" id="AL590842">
    <property type="protein sequence ID" value="CAL18900.1"/>
    <property type="molecule type" value="Genomic_DNA"/>
</dbReference>
<dbReference type="EMBL" id="AE009952">
    <property type="protein sequence ID" value="AAM87542.1"/>
    <property type="molecule type" value="Genomic_DNA"/>
</dbReference>
<dbReference type="EMBL" id="AE017042">
    <property type="protein sequence ID" value="AAS60491.1"/>
    <property type="molecule type" value="Genomic_DNA"/>
</dbReference>
<dbReference type="PIR" id="AB0027">
    <property type="entry name" value="AB0027"/>
</dbReference>
<dbReference type="RefSeq" id="WP_002218942.1">
    <property type="nucleotide sequence ID" value="NZ_WUCM01000078.1"/>
</dbReference>
<dbReference type="RefSeq" id="YP_002345298.1">
    <property type="nucleotide sequence ID" value="NC_003143.1"/>
</dbReference>
<dbReference type="SMR" id="Q8ZJA4"/>
<dbReference type="STRING" id="214092.YPO0218"/>
<dbReference type="PaxDb" id="214092-YPO0218"/>
<dbReference type="DNASU" id="1148945"/>
<dbReference type="EnsemblBacteria" id="AAS60491">
    <property type="protein sequence ID" value="AAS60491"/>
    <property type="gene ID" value="YP_0215"/>
</dbReference>
<dbReference type="GeneID" id="96663188"/>
<dbReference type="KEGG" id="ype:YPO0218"/>
<dbReference type="KEGG" id="ypk:y3998"/>
<dbReference type="KEGG" id="ypm:YP_0215"/>
<dbReference type="PATRIC" id="fig|1028802.3.peg.162"/>
<dbReference type="eggNOG" id="COG0255">
    <property type="taxonomic scope" value="Bacteria"/>
</dbReference>
<dbReference type="HOGENOM" id="CLU_158491_1_2_6"/>
<dbReference type="OMA" id="RFQMATS"/>
<dbReference type="OrthoDB" id="9815192at2"/>
<dbReference type="Proteomes" id="UP000000815">
    <property type="component" value="Chromosome"/>
</dbReference>
<dbReference type="Proteomes" id="UP000001019">
    <property type="component" value="Chromosome"/>
</dbReference>
<dbReference type="Proteomes" id="UP000002490">
    <property type="component" value="Chromosome"/>
</dbReference>
<dbReference type="GO" id="GO:0022625">
    <property type="term" value="C:cytosolic large ribosomal subunit"/>
    <property type="evidence" value="ECO:0000318"/>
    <property type="project" value="GO_Central"/>
</dbReference>
<dbReference type="GO" id="GO:0003735">
    <property type="term" value="F:structural constituent of ribosome"/>
    <property type="evidence" value="ECO:0007669"/>
    <property type="project" value="InterPro"/>
</dbReference>
<dbReference type="GO" id="GO:0006412">
    <property type="term" value="P:translation"/>
    <property type="evidence" value="ECO:0007669"/>
    <property type="project" value="UniProtKB-UniRule"/>
</dbReference>
<dbReference type="CDD" id="cd00427">
    <property type="entry name" value="Ribosomal_L29_HIP"/>
    <property type="match status" value="1"/>
</dbReference>
<dbReference type="FunFam" id="1.10.287.310:FF:000001">
    <property type="entry name" value="50S ribosomal protein L29"/>
    <property type="match status" value="1"/>
</dbReference>
<dbReference type="Gene3D" id="6.10.140.1970">
    <property type="match status" value="1"/>
</dbReference>
<dbReference type="HAMAP" id="MF_00374">
    <property type="entry name" value="Ribosomal_uL29"/>
    <property type="match status" value="1"/>
</dbReference>
<dbReference type="InterPro" id="IPR050063">
    <property type="entry name" value="Ribosomal_protein_uL29"/>
</dbReference>
<dbReference type="InterPro" id="IPR001854">
    <property type="entry name" value="Ribosomal_uL29"/>
</dbReference>
<dbReference type="InterPro" id="IPR018254">
    <property type="entry name" value="Ribosomal_uL29_CS"/>
</dbReference>
<dbReference type="InterPro" id="IPR036049">
    <property type="entry name" value="Ribosomal_uL29_sf"/>
</dbReference>
<dbReference type="NCBIfam" id="TIGR00012">
    <property type="entry name" value="L29"/>
    <property type="match status" value="1"/>
</dbReference>
<dbReference type="PANTHER" id="PTHR10916">
    <property type="entry name" value="60S RIBOSOMAL PROTEIN L35/50S RIBOSOMAL PROTEIN L29"/>
    <property type="match status" value="1"/>
</dbReference>
<dbReference type="PANTHER" id="PTHR10916:SF0">
    <property type="entry name" value="LARGE RIBOSOMAL SUBUNIT PROTEIN UL29C"/>
    <property type="match status" value="1"/>
</dbReference>
<dbReference type="Pfam" id="PF00831">
    <property type="entry name" value="Ribosomal_L29"/>
    <property type="match status" value="1"/>
</dbReference>
<dbReference type="SUPFAM" id="SSF46561">
    <property type="entry name" value="Ribosomal protein L29 (L29p)"/>
    <property type="match status" value="1"/>
</dbReference>
<dbReference type="PROSITE" id="PS00579">
    <property type="entry name" value="RIBOSOMAL_L29"/>
    <property type="match status" value="1"/>
</dbReference>
<keyword id="KW-1185">Reference proteome</keyword>
<keyword id="KW-0687">Ribonucleoprotein</keyword>
<keyword id="KW-0689">Ribosomal protein</keyword>
<feature type="chain" id="PRO_0000130503" description="Large ribosomal subunit protein uL29">
    <location>
        <begin position="1"/>
        <end position="63"/>
    </location>
</feature>
<name>RL29_YERPE</name>
<accession>Q8ZJA4</accession>
<accession>Q0WK90</accession>
<comment type="similarity">
    <text evidence="1">Belongs to the universal ribosomal protein uL29 family.</text>
</comment>
<evidence type="ECO:0000255" key="1">
    <source>
        <dbReference type="HAMAP-Rule" id="MF_00374"/>
    </source>
</evidence>
<evidence type="ECO:0000305" key="2"/>
<reference key="1">
    <citation type="journal article" date="2001" name="Nature">
        <title>Genome sequence of Yersinia pestis, the causative agent of plague.</title>
        <authorList>
            <person name="Parkhill J."/>
            <person name="Wren B.W."/>
            <person name="Thomson N.R."/>
            <person name="Titball R.W."/>
            <person name="Holden M.T.G."/>
            <person name="Prentice M.B."/>
            <person name="Sebaihia M."/>
            <person name="James K.D."/>
            <person name="Churcher C.M."/>
            <person name="Mungall K.L."/>
            <person name="Baker S."/>
            <person name="Basham D."/>
            <person name="Bentley S.D."/>
            <person name="Brooks K."/>
            <person name="Cerdeno-Tarraga A.-M."/>
            <person name="Chillingworth T."/>
            <person name="Cronin A."/>
            <person name="Davies R.M."/>
            <person name="Davis P."/>
            <person name="Dougan G."/>
            <person name="Feltwell T."/>
            <person name="Hamlin N."/>
            <person name="Holroyd S."/>
            <person name="Jagels K."/>
            <person name="Karlyshev A.V."/>
            <person name="Leather S."/>
            <person name="Moule S."/>
            <person name="Oyston P.C.F."/>
            <person name="Quail M.A."/>
            <person name="Rutherford K.M."/>
            <person name="Simmonds M."/>
            <person name="Skelton J."/>
            <person name="Stevens K."/>
            <person name="Whitehead S."/>
            <person name="Barrell B.G."/>
        </authorList>
    </citation>
    <scope>NUCLEOTIDE SEQUENCE [LARGE SCALE GENOMIC DNA]</scope>
    <source>
        <strain>CO-92 / Biovar Orientalis</strain>
    </source>
</reference>
<reference key="2">
    <citation type="journal article" date="2002" name="J. Bacteriol.">
        <title>Genome sequence of Yersinia pestis KIM.</title>
        <authorList>
            <person name="Deng W."/>
            <person name="Burland V."/>
            <person name="Plunkett G. III"/>
            <person name="Boutin A."/>
            <person name="Mayhew G.F."/>
            <person name="Liss P."/>
            <person name="Perna N.T."/>
            <person name="Rose D.J."/>
            <person name="Mau B."/>
            <person name="Zhou S."/>
            <person name="Schwartz D.C."/>
            <person name="Fetherston J.D."/>
            <person name="Lindler L.E."/>
            <person name="Brubaker R.R."/>
            <person name="Plano G.V."/>
            <person name="Straley S.C."/>
            <person name="McDonough K.A."/>
            <person name="Nilles M.L."/>
            <person name="Matson J.S."/>
            <person name="Blattner F.R."/>
            <person name="Perry R.D."/>
        </authorList>
    </citation>
    <scope>NUCLEOTIDE SEQUENCE [LARGE SCALE GENOMIC DNA]</scope>
    <source>
        <strain>KIM10+ / Biovar Mediaevalis</strain>
    </source>
</reference>
<reference key="3">
    <citation type="journal article" date="2004" name="DNA Res.">
        <title>Complete genome sequence of Yersinia pestis strain 91001, an isolate avirulent to humans.</title>
        <authorList>
            <person name="Song Y."/>
            <person name="Tong Z."/>
            <person name="Wang J."/>
            <person name="Wang L."/>
            <person name="Guo Z."/>
            <person name="Han Y."/>
            <person name="Zhang J."/>
            <person name="Pei D."/>
            <person name="Zhou D."/>
            <person name="Qin H."/>
            <person name="Pang X."/>
            <person name="Han Y."/>
            <person name="Zhai J."/>
            <person name="Li M."/>
            <person name="Cui B."/>
            <person name="Qi Z."/>
            <person name="Jin L."/>
            <person name="Dai R."/>
            <person name="Chen F."/>
            <person name="Li S."/>
            <person name="Ye C."/>
            <person name="Du Z."/>
            <person name="Lin W."/>
            <person name="Wang J."/>
            <person name="Yu J."/>
            <person name="Yang H."/>
            <person name="Wang J."/>
            <person name="Huang P."/>
            <person name="Yang R."/>
        </authorList>
    </citation>
    <scope>NUCLEOTIDE SEQUENCE [LARGE SCALE GENOMIC DNA]</scope>
    <source>
        <strain>91001 / Biovar Mediaevalis</strain>
    </source>
</reference>
<protein>
    <recommendedName>
        <fullName evidence="1">Large ribosomal subunit protein uL29</fullName>
    </recommendedName>
    <alternativeName>
        <fullName evidence="2">50S ribosomal protein L29</fullName>
    </alternativeName>
</protein>
<proteinExistence type="inferred from homology"/>